<dbReference type="EC" id="1.4.3.5" evidence="1"/>
<dbReference type="EMBL" id="AP008232">
    <property type="protein sequence ID" value="BAE74722.1"/>
    <property type="molecule type" value="Genomic_DNA"/>
</dbReference>
<dbReference type="RefSeq" id="WP_011411267.1">
    <property type="nucleotide sequence ID" value="NC_007712.1"/>
</dbReference>
<dbReference type="SMR" id="Q2NT03"/>
<dbReference type="STRING" id="343509.SG1447"/>
<dbReference type="KEGG" id="sgl:SG1447"/>
<dbReference type="eggNOG" id="COG0259">
    <property type="taxonomic scope" value="Bacteria"/>
</dbReference>
<dbReference type="HOGENOM" id="CLU_032263_2_2_6"/>
<dbReference type="OrthoDB" id="9780392at2"/>
<dbReference type="BioCyc" id="SGLO343509:SGP1_RS12830-MONOMER"/>
<dbReference type="UniPathway" id="UPA01068">
    <property type="reaction ID" value="UER00304"/>
</dbReference>
<dbReference type="UniPathway" id="UPA01068">
    <property type="reaction ID" value="UER00305"/>
</dbReference>
<dbReference type="Proteomes" id="UP000001932">
    <property type="component" value="Chromosome"/>
</dbReference>
<dbReference type="GO" id="GO:0010181">
    <property type="term" value="F:FMN binding"/>
    <property type="evidence" value="ECO:0007669"/>
    <property type="project" value="UniProtKB-UniRule"/>
</dbReference>
<dbReference type="GO" id="GO:0004733">
    <property type="term" value="F:pyridoxamine phosphate oxidase activity"/>
    <property type="evidence" value="ECO:0007669"/>
    <property type="project" value="UniProtKB-UniRule"/>
</dbReference>
<dbReference type="GO" id="GO:0008615">
    <property type="term" value="P:pyridoxine biosynthetic process"/>
    <property type="evidence" value="ECO:0007669"/>
    <property type="project" value="UniProtKB-KW"/>
</dbReference>
<dbReference type="FunFam" id="2.30.110.10:FF:000001">
    <property type="entry name" value="Pyridoxine/pyridoxamine 5'-phosphate oxidase"/>
    <property type="match status" value="1"/>
</dbReference>
<dbReference type="Gene3D" id="2.30.110.10">
    <property type="entry name" value="Electron Transport, Fmn-binding Protein, Chain A"/>
    <property type="match status" value="1"/>
</dbReference>
<dbReference type="HAMAP" id="MF_01629">
    <property type="entry name" value="PdxH"/>
    <property type="match status" value="1"/>
</dbReference>
<dbReference type="InterPro" id="IPR000659">
    <property type="entry name" value="Pyridox_Oxase"/>
</dbReference>
<dbReference type="InterPro" id="IPR019740">
    <property type="entry name" value="Pyridox_Oxase_CS"/>
</dbReference>
<dbReference type="InterPro" id="IPR011576">
    <property type="entry name" value="Pyridox_Oxase_N"/>
</dbReference>
<dbReference type="InterPro" id="IPR019576">
    <property type="entry name" value="Pyridoxamine_oxidase_dimer_C"/>
</dbReference>
<dbReference type="InterPro" id="IPR012349">
    <property type="entry name" value="Split_barrel_FMN-bd"/>
</dbReference>
<dbReference type="NCBIfam" id="TIGR00558">
    <property type="entry name" value="pdxH"/>
    <property type="match status" value="1"/>
</dbReference>
<dbReference type="NCBIfam" id="NF004231">
    <property type="entry name" value="PRK05679.1"/>
    <property type="match status" value="1"/>
</dbReference>
<dbReference type="PANTHER" id="PTHR10851:SF0">
    <property type="entry name" value="PYRIDOXINE-5'-PHOSPHATE OXIDASE"/>
    <property type="match status" value="1"/>
</dbReference>
<dbReference type="PANTHER" id="PTHR10851">
    <property type="entry name" value="PYRIDOXINE-5-PHOSPHATE OXIDASE"/>
    <property type="match status" value="1"/>
</dbReference>
<dbReference type="Pfam" id="PF10590">
    <property type="entry name" value="PNP_phzG_C"/>
    <property type="match status" value="1"/>
</dbReference>
<dbReference type="Pfam" id="PF01243">
    <property type="entry name" value="PNPOx_N"/>
    <property type="match status" value="1"/>
</dbReference>
<dbReference type="PIRSF" id="PIRSF000190">
    <property type="entry name" value="Pyd_amn-ph_oxd"/>
    <property type="match status" value="1"/>
</dbReference>
<dbReference type="SUPFAM" id="SSF50475">
    <property type="entry name" value="FMN-binding split barrel"/>
    <property type="match status" value="1"/>
</dbReference>
<dbReference type="PROSITE" id="PS01064">
    <property type="entry name" value="PYRIDOX_OXIDASE"/>
    <property type="match status" value="1"/>
</dbReference>
<proteinExistence type="inferred from homology"/>
<protein>
    <recommendedName>
        <fullName evidence="1">Pyridoxine/pyridoxamine 5'-phosphate oxidase</fullName>
        <ecNumber evidence="1">1.4.3.5</ecNumber>
    </recommendedName>
    <alternativeName>
        <fullName evidence="1">PNP/PMP oxidase</fullName>
        <shortName evidence="1">PNPOx</shortName>
    </alternativeName>
    <alternativeName>
        <fullName evidence="1">Pyridoxal 5'-phosphate synthase</fullName>
    </alternativeName>
</protein>
<accession>Q2NT03</accession>
<organism>
    <name type="scientific">Sodalis glossinidius (strain morsitans)</name>
    <dbReference type="NCBI Taxonomy" id="343509"/>
    <lineage>
        <taxon>Bacteria</taxon>
        <taxon>Pseudomonadati</taxon>
        <taxon>Pseudomonadota</taxon>
        <taxon>Gammaproteobacteria</taxon>
        <taxon>Enterobacterales</taxon>
        <taxon>Bruguierivoracaceae</taxon>
        <taxon>Sodalis</taxon>
    </lineage>
</organism>
<sequence length="216" mass="25030">MTEQLIDIAALRREYTRGGLRRADLTAEPMDLFEQWLKQACAAQLPDATAMSVGTVDENGQPYQRLVLLKHFDRQGMVFYTNLGSRKAAHLAHNPRISLHFPWHVLERQVLVLGRAERLSVIEVMKYFHSRPRDSQIGAWVSRQSSRISSRGVLESKFLELKQKFAQGDVPLPSFWGGYRVSIEAMEFWQGGEHRMHDRFLYRRENGGWHIDRLAP</sequence>
<evidence type="ECO:0000255" key="1">
    <source>
        <dbReference type="HAMAP-Rule" id="MF_01629"/>
    </source>
</evidence>
<feature type="chain" id="PRO_0000255892" description="Pyridoxine/pyridoxamine 5'-phosphate oxidase">
    <location>
        <begin position="1"/>
        <end position="216"/>
    </location>
</feature>
<feature type="binding site" evidence="1">
    <location>
        <begin position="12"/>
        <end position="15"/>
    </location>
    <ligand>
        <name>substrate</name>
    </ligand>
</feature>
<feature type="binding site" evidence="1">
    <location>
        <begin position="65"/>
        <end position="70"/>
    </location>
    <ligand>
        <name>FMN</name>
        <dbReference type="ChEBI" id="CHEBI:58210"/>
    </ligand>
</feature>
<feature type="binding site" evidence="1">
    <location>
        <position position="70"/>
    </location>
    <ligand>
        <name>substrate</name>
    </ligand>
</feature>
<feature type="binding site" evidence="1">
    <location>
        <begin position="80"/>
        <end position="81"/>
    </location>
    <ligand>
        <name>FMN</name>
        <dbReference type="ChEBI" id="CHEBI:58210"/>
    </ligand>
</feature>
<feature type="binding site" evidence="1">
    <location>
        <position position="86"/>
    </location>
    <ligand>
        <name>FMN</name>
        <dbReference type="ChEBI" id="CHEBI:58210"/>
    </ligand>
</feature>
<feature type="binding site" evidence="1">
    <location>
        <position position="87"/>
    </location>
    <ligand>
        <name>FMN</name>
        <dbReference type="ChEBI" id="CHEBI:58210"/>
    </ligand>
</feature>
<feature type="binding site" evidence="1">
    <location>
        <position position="109"/>
    </location>
    <ligand>
        <name>FMN</name>
        <dbReference type="ChEBI" id="CHEBI:58210"/>
    </ligand>
</feature>
<feature type="binding site" evidence="1">
    <location>
        <position position="127"/>
    </location>
    <ligand>
        <name>substrate</name>
    </ligand>
</feature>
<feature type="binding site" evidence="1">
    <location>
        <position position="131"/>
    </location>
    <ligand>
        <name>substrate</name>
    </ligand>
</feature>
<feature type="binding site" evidence="1">
    <location>
        <position position="135"/>
    </location>
    <ligand>
        <name>substrate</name>
    </ligand>
</feature>
<feature type="binding site" evidence="1">
    <location>
        <begin position="144"/>
        <end position="145"/>
    </location>
    <ligand>
        <name>FMN</name>
        <dbReference type="ChEBI" id="CHEBI:58210"/>
    </ligand>
</feature>
<feature type="binding site" evidence="1">
    <location>
        <position position="189"/>
    </location>
    <ligand>
        <name>FMN</name>
        <dbReference type="ChEBI" id="CHEBI:58210"/>
    </ligand>
</feature>
<feature type="binding site" evidence="1">
    <location>
        <begin position="195"/>
        <end position="197"/>
    </location>
    <ligand>
        <name>substrate</name>
    </ligand>
</feature>
<feature type="binding site" evidence="1">
    <location>
        <position position="199"/>
    </location>
    <ligand>
        <name>FMN</name>
        <dbReference type="ChEBI" id="CHEBI:58210"/>
    </ligand>
</feature>
<name>PDXH_SODGM</name>
<gene>
    <name evidence="1" type="primary">pdxH</name>
    <name type="ordered locus">SG1447</name>
</gene>
<comment type="function">
    <text evidence="1">Catalyzes the oxidation of either pyridoxine 5'-phosphate (PNP) or pyridoxamine 5'-phosphate (PMP) into pyridoxal 5'-phosphate (PLP).</text>
</comment>
<comment type="catalytic activity">
    <reaction evidence="1">
        <text>pyridoxamine 5'-phosphate + O2 + H2O = pyridoxal 5'-phosphate + H2O2 + NH4(+)</text>
        <dbReference type="Rhea" id="RHEA:15817"/>
        <dbReference type="ChEBI" id="CHEBI:15377"/>
        <dbReference type="ChEBI" id="CHEBI:15379"/>
        <dbReference type="ChEBI" id="CHEBI:16240"/>
        <dbReference type="ChEBI" id="CHEBI:28938"/>
        <dbReference type="ChEBI" id="CHEBI:58451"/>
        <dbReference type="ChEBI" id="CHEBI:597326"/>
        <dbReference type="EC" id="1.4.3.5"/>
    </reaction>
</comment>
<comment type="catalytic activity">
    <reaction evidence="1">
        <text>pyridoxine 5'-phosphate + O2 = pyridoxal 5'-phosphate + H2O2</text>
        <dbReference type="Rhea" id="RHEA:15149"/>
        <dbReference type="ChEBI" id="CHEBI:15379"/>
        <dbReference type="ChEBI" id="CHEBI:16240"/>
        <dbReference type="ChEBI" id="CHEBI:58589"/>
        <dbReference type="ChEBI" id="CHEBI:597326"/>
        <dbReference type="EC" id="1.4.3.5"/>
    </reaction>
</comment>
<comment type="cofactor">
    <cofactor evidence="1">
        <name>FMN</name>
        <dbReference type="ChEBI" id="CHEBI:58210"/>
    </cofactor>
    <text evidence="1">Binds 1 FMN per subunit.</text>
</comment>
<comment type="pathway">
    <text evidence="1">Cofactor metabolism; pyridoxal 5'-phosphate salvage; pyridoxal 5'-phosphate from pyridoxamine 5'-phosphate: step 1/1.</text>
</comment>
<comment type="pathway">
    <text evidence="1">Cofactor metabolism; pyridoxal 5'-phosphate salvage; pyridoxal 5'-phosphate from pyridoxine 5'-phosphate: step 1/1.</text>
</comment>
<comment type="subunit">
    <text evidence="1">Homodimer.</text>
</comment>
<comment type="similarity">
    <text evidence="1">Belongs to the pyridoxamine 5'-phosphate oxidase family.</text>
</comment>
<keyword id="KW-0285">Flavoprotein</keyword>
<keyword id="KW-0288">FMN</keyword>
<keyword id="KW-0560">Oxidoreductase</keyword>
<keyword id="KW-0664">Pyridoxine biosynthesis</keyword>
<reference key="1">
    <citation type="journal article" date="2006" name="Genome Res.">
        <title>Massive genome erosion and functional adaptations provide insights into the symbiotic lifestyle of Sodalis glossinidius in the tsetse host.</title>
        <authorList>
            <person name="Toh H."/>
            <person name="Weiss B.L."/>
            <person name="Perkin S.A.H."/>
            <person name="Yamashita A."/>
            <person name="Oshima K."/>
            <person name="Hattori M."/>
            <person name="Aksoy S."/>
        </authorList>
    </citation>
    <scope>NUCLEOTIDE SEQUENCE [LARGE SCALE GENOMIC DNA]</scope>
    <source>
        <strain>morsitans</strain>
    </source>
</reference>